<name>PSRP_PSEAE</name>
<accession>Q9I2X0</accession>
<gene>
    <name type="ordered locus">PA1769</name>
</gene>
<keyword id="KW-0418">Kinase</keyword>
<keyword id="KW-0547">Nucleotide-binding</keyword>
<keyword id="KW-1185">Reference proteome</keyword>
<keyword id="KW-0723">Serine/threonine-protein kinase</keyword>
<keyword id="KW-0808">Transferase</keyword>
<dbReference type="EC" id="2.7.11.33" evidence="1"/>
<dbReference type="EC" id="2.7.4.28" evidence="1"/>
<dbReference type="EMBL" id="AE004091">
    <property type="protein sequence ID" value="AAG05158.1"/>
    <property type="molecule type" value="Genomic_DNA"/>
</dbReference>
<dbReference type="PIR" id="D83425">
    <property type="entry name" value="D83425"/>
</dbReference>
<dbReference type="RefSeq" id="NP_250460.1">
    <property type="nucleotide sequence ID" value="NC_002516.2"/>
</dbReference>
<dbReference type="RefSeq" id="WP_003120310.1">
    <property type="nucleotide sequence ID" value="NC_002516.2"/>
</dbReference>
<dbReference type="SMR" id="Q9I2X0"/>
<dbReference type="FunCoup" id="Q9I2X0">
    <property type="interactions" value="289"/>
</dbReference>
<dbReference type="STRING" id="208964.PA1769"/>
<dbReference type="PaxDb" id="208964-PA1769"/>
<dbReference type="DNASU" id="880724"/>
<dbReference type="GeneID" id="880724"/>
<dbReference type="KEGG" id="pae:PA1769"/>
<dbReference type="PATRIC" id="fig|208964.12.peg.1833"/>
<dbReference type="PseudoCAP" id="PA1769"/>
<dbReference type="HOGENOM" id="CLU_046206_1_0_6"/>
<dbReference type="InParanoid" id="Q9I2X0"/>
<dbReference type="OrthoDB" id="9782201at2"/>
<dbReference type="PhylomeDB" id="Q9I2X0"/>
<dbReference type="BioCyc" id="PAER208964:G1FZ6-1800-MONOMER"/>
<dbReference type="Proteomes" id="UP000002438">
    <property type="component" value="Chromosome"/>
</dbReference>
<dbReference type="GO" id="GO:0043531">
    <property type="term" value="F:ADP binding"/>
    <property type="evidence" value="ECO:0007669"/>
    <property type="project" value="UniProtKB-UniRule"/>
</dbReference>
<dbReference type="GO" id="GO:0005524">
    <property type="term" value="F:ATP binding"/>
    <property type="evidence" value="ECO:0007669"/>
    <property type="project" value="InterPro"/>
</dbReference>
<dbReference type="GO" id="GO:0016776">
    <property type="term" value="F:phosphotransferase activity, phosphate group as acceptor"/>
    <property type="evidence" value="ECO:0007669"/>
    <property type="project" value="UniProtKB-UniRule"/>
</dbReference>
<dbReference type="GO" id="GO:0004674">
    <property type="term" value="F:protein serine/threonine kinase activity"/>
    <property type="evidence" value="ECO:0007669"/>
    <property type="project" value="UniProtKB-UniRule"/>
</dbReference>
<dbReference type="HAMAP" id="MF_01062">
    <property type="entry name" value="PSRP"/>
    <property type="match status" value="1"/>
</dbReference>
<dbReference type="InterPro" id="IPR005177">
    <property type="entry name" value="Kinase-pyrophosphorylase"/>
</dbReference>
<dbReference type="InterPro" id="IPR026530">
    <property type="entry name" value="PSRP"/>
</dbReference>
<dbReference type="NCBIfam" id="NF003742">
    <property type="entry name" value="PRK05339.1"/>
    <property type="match status" value="1"/>
</dbReference>
<dbReference type="PANTHER" id="PTHR31756">
    <property type="entry name" value="PYRUVATE, PHOSPHATE DIKINASE REGULATORY PROTEIN 1, CHLOROPLASTIC"/>
    <property type="match status" value="1"/>
</dbReference>
<dbReference type="PANTHER" id="PTHR31756:SF3">
    <property type="entry name" value="PYRUVATE, PHOSPHATE DIKINASE REGULATORY PROTEIN 1, CHLOROPLASTIC"/>
    <property type="match status" value="1"/>
</dbReference>
<dbReference type="Pfam" id="PF03618">
    <property type="entry name" value="Kinase-PPPase"/>
    <property type="match status" value="1"/>
</dbReference>
<sequence length="274" mass="31106">MQMKRTAFFISDGTGITAETLGQSLLAQFENISFVKLTRPYIDTEEKARAMVQQINNAAESDGARPIIFDTIVNRDIRAVLAQSNGFMIDIFATFLSPLEQELSADSSYSVGKSHSIGHNSNYMDRIEAVNFALDNDDGARTHYYDKADLILVGVSRCGKTPTCLYMALQYGIRAANYPLTEEDMERLQLPNALKQYKHKLFGLTIDPDRLTAIRNERKPNSRYASFAQCEFEVREVESLFRRENIAYINSTHFSVEEISAKILVEKGVERRFK</sequence>
<proteinExistence type="inferred from homology"/>
<comment type="function">
    <text evidence="1">Bifunctional serine/threonine kinase and phosphorylase involved in the regulation of the phosphoenolpyruvate synthase (PEPS) by catalyzing its phosphorylation/dephosphorylation.</text>
</comment>
<comment type="catalytic activity">
    <reaction evidence="1">
        <text>[pyruvate, water dikinase] + ADP = [pyruvate, water dikinase]-phosphate + AMP + H(+)</text>
        <dbReference type="Rhea" id="RHEA:46020"/>
        <dbReference type="Rhea" id="RHEA-COMP:11425"/>
        <dbReference type="Rhea" id="RHEA-COMP:11426"/>
        <dbReference type="ChEBI" id="CHEBI:15378"/>
        <dbReference type="ChEBI" id="CHEBI:43176"/>
        <dbReference type="ChEBI" id="CHEBI:68546"/>
        <dbReference type="ChEBI" id="CHEBI:456215"/>
        <dbReference type="ChEBI" id="CHEBI:456216"/>
        <dbReference type="EC" id="2.7.11.33"/>
    </reaction>
</comment>
<comment type="catalytic activity">
    <reaction evidence="1">
        <text>[pyruvate, water dikinase]-phosphate + phosphate + H(+) = [pyruvate, water dikinase] + diphosphate</text>
        <dbReference type="Rhea" id="RHEA:48580"/>
        <dbReference type="Rhea" id="RHEA-COMP:11425"/>
        <dbReference type="Rhea" id="RHEA-COMP:11426"/>
        <dbReference type="ChEBI" id="CHEBI:15378"/>
        <dbReference type="ChEBI" id="CHEBI:33019"/>
        <dbReference type="ChEBI" id="CHEBI:43176"/>
        <dbReference type="ChEBI" id="CHEBI:43474"/>
        <dbReference type="ChEBI" id="CHEBI:68546"/>
        <dbReference type="EC" id="2.7.4.28"/>
    </reaction>
</comment>
<comment type="similarity">
    <text evidence="1">Belongs to the pyruvate, phosphate/water dikinase regulatory protein family. PSRP subfamily.</text>
</comment>
<feature type="chain" id="PRO_0000196689" description="Putative phosphoenolpyruvate synthase regulatory protein">
    <location>
        <begin position="1"/>
        <end position="274"/>
    </location>
</feature>
<feature type="binding site" evidence="1">
    <location>
        <begin position="154"/>
        <end position="161"/>
    </location>
    <ligand>
        <name>ADP</name>
        <dbReference type="ChEBI" id="CHEBI:456216"/>
    </ligand>
</feature>
<protein>
    <recommendedName>
        <fullName evidence="1">Putative phosphoenolpyruvate synthase regulatory protein</fullName>
        <shortName evidence="1">PEP synthase regulatory protein</shortName>
        <shortName evidence="1">PSRP</shortName>
        <ecNumber evidence="1">2.7.11.33</ecNumber>
        <ecNumber evidence="1">2.7.4.28</ecNumber>
    </recommendedName>
    <alternativeName>
        <fullName evidence="1">Pyruvate, water dikinase regulatory protein</fullName>
    </alternativeName>
</protein>
<organism>
    <name type="scientific">Pseudomonas aeruginosa (strain ATCC 15692 / DSM 22644 / CIP 104116 / JCM 14847 / LMG 12228 / 1C / PRS 101 / PAO1)</name>
    <dbReference type="NCBI Taxonomy" id="208964"/>
    <lineage>
        <taxon>Bacteria</taxon>
        <taxon>Pseudomonadati</taxon>
        <taxon>Pseudomonadota</taxon>
        <taxon>Gammaproteobacteria</taxon>
        <taxon>Pseudomonadales</taxon>
        <taxon>Pseudomonadaceae</taxon>
        <taxon>Pseudomonas</taxon>
    </lineage>
</organism>
<evidence type="ECO:0000255" key="1">
    <source>
        <dbReference type="HAMAP-Rule" id="MF_01062"/>
    </source>
</evidence>
<reference key="1">
    <citation type="journal article" date="2000" name="Nature">
        <title>Complete genome sequence of Pseudomonas aeruginosa PAO1, an opportunistic pathogen.</title>
        <authorList>
            <person name="Stover C.K."/>
            <person name="Pham X.-Q.T."/>
            <person name="Erwin A.L."/>
            <person name="Mizoguchi S.D."/>
            <person name="Warrener P."/>
            <person name="Hickey M.J."/>
            <person name="Brinkman F.S.L."/>
            <person name="Hufnagle W.O."/>
            <person name="Kowalik D.J."/>
            <person name="Lagrou M."/>
            <person name="Garber R.L."/>
            <person name="Goltry L."/>
            <person name="Tolentino E."/>
            <person name="Westbrock-Wadman S."/>
            <person name="Yuan Y."/>
            <person name="Brody L.L."/>
            <person name="Coulter S.N."/>
            <person name="Folger K.R."/>
            <person name="Kas A."/>
            <person name="Larbig K."/>
            <person name="Lim R.M."/>
            <person name="Smith K.A."/>
            <person name="Spencer D.H."/>
            <person name="Wong G.K.-S."/>
            <person name="Wu Z."/>
            <person name="Paulsen I.T."/>
            <person name="Reizer J."/>
            <person name="Saier M.H. Jr."/>
            <person name="Hancock R.E.W."/>
            <person name="Lory S."/>
            <person name="Olson M.V."/>
        </authorList>
    </citation>
    <scope>NUCLEOTIDE SEQUENCE [LARGE SCALE GENOMIC DNA]</scope>
    <source>
        <strain>ATCC 15692 / DSM 22644 / CIP 104116 / JCM 14847 / LMG 12228 / 1C / PRS 101 / PAO1</strain>
    </source>
</reference>